<feature type="chain" id="PRO_1000166116" description="Large ribosomal subunit protein uL5">
    <location>
        <begin position="1"/>
        <end position="185"/>
    </location>
</feature>
<dbReference type="EMBL" id="CP001488">
    <property type="protein sequence ID" value="ACO00997.1"/>
    <property type="molecule type" value="Genomic_DNA"/>
</dbReference>
<dbReference type="RefSeq" id="WP_002964350.1">
    <property type="nucleotide sequence ID" value="NC_012441.1"/>
</dbReference>
<dbReference type="SMR" id="C0RJI9"/>
<dbReference type="GeneID" id="97533536"/>
<dbReference type="KEGG" id="bmi:BMEA_A1266"/>
<dbReference type="HOGENOM" id="CLU_061015_2_1_5"/>
<dbReference type="Proteomes" id="UP000001748">
    <property type="component" value="Chromosome I"/>
</dbReference>
<dbReference type="GO" id="GO:1990904">
    <property type="term" value="C:ribonucleoprotein complex"/>
    <property type="evidence" value="ECO:0007669"/>
    <property type="project" value="UniProtKB-KW"/>
</dbReference>
<dbReference type="GO" id="GO:0005840">
    <property type="term" value="C:ribosome"/>
    <property type="evidence" value="ECO:0007669"/>
    <property type="project" value="UniProtKB-KW"/>
</dbReference>
<dbReference type="GO" id="GO:0019843">
    <property type="term" value="F:rRNA binding"/>
    <property type="evidence" value="ECO:0007669"/>
    <property type="project" value="UniProtKB-UniRule"/>
</dbReference>
<dbReference type="GO" id="GO:0003735">
    <property type="term" value="F:structural constituent of ribosome"/>
    <property type="evidence" value="ECO:0007669"/>
    <property type="project" value="InterPro"/>
</dbReference>
<dbReference type="GO" id="GO:0000049">
    <property type="term" value="F:tRNA binding"/>
    <property type="evidence" value="ECO:0007669"/>
    <property type="project" value="UniProtKB-UniRule"/>
</dbReference>
<dbReference type="GO" id="GO:0006412">
    <property type="term" value="P:translation"/>
    <property type="evidence" value="ECO:0007669"/>
    <property type="project" value="UniProtKB-UniRule"/>
</dbReference>
<dbReference type="FunFam" id="3.30.1440.10:FF:000001">
    <property type="entry name" value="50S ribosomal protein L5"/>
    <property type="match status" value="1"/>
</dbReference>
<dbReference type="Gene3D" id="3.30.1440.10">
    <property type="match status" value="1"/>
</dbReference>
<dbReference type="HAMAP" id="MF_01333_B">
    <property type="entry name" value="Ribosomal_uL5_B"/>
    <property type="match status" value="1"/>
</dbReference>
<dbReference type="InterPro" id="IPR002132">
    <property type="entry name" value="Ribosomal_uL5"/>
</dbReference>
<dbReference type="InterPro" id="IPR020930">
    <property type="entry name" value="Ribosomal_uL5_bac-type"/>
</dbReference>
<dbReference type="InterPro" id="IPR031309">
    <property type="entry name" value="Ribosomal_uL5_C"/>
</dbReference>
<dbReference type="InterPro" id="IPR020929">
    <property type="entry name" value="Ribosomal_uL5_CS"/>
</dbReference>
<dbReference type="InterPro" id="IPR022803">
    <property type="entry name" value="Ribosomal_uL5_dom_sf"/>
</dbReference>
<dbReference type="InterPro" id="IPR031310">
    <property type="entry name" value="Ribosomal_uL5_N"/>
</dbReference>
<dbReference type="NCBIfam" id="NF000585">
    <property type="entry name" value="PRK00010.1"/>
    <property type="match status" value="1"/>
</dbReference>
<dbReference type="PANTHER" id="PTHR11994">
    <property type="entry name" value="60S RIBOSOMAL PROTEIN L11-RELATED"/>
    <property type="match status" value="1"/>
</dbReference>
<dbReference type="Pfam" id="PF00281">
    <property type="entry name" value="Ribosomal_L5"/>
    <property type="match status" value="1"/>
</dbReference>
<dbReference type="Pfam" id="PF00673">
    <property type="entry name" value="Ribosomal_L5_C"/>
    <property type="match status" value="1"/>
</dbReference>
<dbReference type="PIRSF" id="PIRSF002161">
    <property type="entry name" value="Ribosomal_L5"/>
    <property type="match status" value="1"/>
</dbReference>
<dbReference type="SUPFAM" id="SSF55282">
    <property type="entry name" value="RL5-like"/>
    <property type="match status" value="1"/>
</dbReference>
<dbReference type="PROSITE" id="PS00358">
    <property type="entry name" value="RIBOSOMAL_L5"/>
    <property type="match status" value="1"/>
</dbReference>
<accession>C0RJI9</accession>
<reference key="1">
    <citation type="submission" date="2009-03" db="EMBL/GenBank/DDBJ databases">
        <title>Brucella melitensis ATCC 23457 whole genome shotgun sequencing project.</title>
        <authorList>
            <person name="Setubal J.C."/>
            <person name="Boyle S."/>
            <person name="Crasta O.R."/>
            <person name="Gillespie J.J."/>
            <person name="Kenyon R.W."/>
            <person name="Lu J."/>
            <person name="Mane S."/>
            <person name="Nagrani S."/>
            <person name="Shallom J.M."/>
            <person name="Shallom S."/>
            <person name="Shukla M."/>
            <person name="Snyder E.E."/>
            <person name="Sobral B.W."/>
            <person name="Wattam A.R."/>
            <person name="Will R."/>
            <person name="Williams K."/>
            <person name="Yoo H."/>
            <person name="Munk C."/>
            <person name="Tapia R."/>
            <person name="Han C."/>
            <person name="Detter J.C."/>
            <person name="Bruce D."/>
            <person name="Brettin T.S."/>
        </authorList>
    </citation>
    <scope>NUCLEOTIDE SEQUENCE [LARGE SCALE GENOMIC DNA]</scope>
    <source>
        <strain>ATCC 23457</strain>
    </source>
</reference>
<evidence type="ECO:0000255" key="1">
    <source>
        <dbReference type="HAMAP-Rule" id="MF_01333"/>
    </source>
</evidence>
<evidence type="ECO:0000305" key="2"/>
<name>RL5_BRUMB</name>
<proteinExistence type="inferred from homology"/>
<organism>
    <name type="scientific">Brucella melitensis biotype 2 (strain ATCC 23457)</name>
    <dbReference type="NCBI Taxonomy" id="546272"/>
    <lineage>
        <taxon>Bacteria</taxon>
        <taxon>Pseudomonadati</taxon>
        <taxon>Pseudomonadota</taxon>
        <taxon>Alphaproteobacteria</taxon>
        <taxon>Hyphomicrobiales</taxon>
        <taxon>Brucellaceae</taxon>
        <taxon>Brucella/Ochrobactrum group</taxon>
        <taxon>Brucella</taxon>
    </lineage>
</organism>
<keyword id="KW-0687">Ribonucleoprotein</keyword>
<keyword id="KW-0689">Ribosomal protein</keyword>
<keyword id="KW-0694">RNA-binding</keyword>
<keyword id="KW-0699">rRNA-binding</keyword>
<keyword id="KW-0820">tRNA-binding</keyword>
<gene>
    <name evidence="1" type="primary">rplE</name>
    <name type="ordered locus">BMEA_A1266</name>
</gene>
<comment type="function">
    <text evidence="1">This is one of the proteins that bind and probably mediate the attachment of the 5S RNA into the large ribosomal subunit, where it forms part of the central protuberance. In the 70S ribosome it contacts protein S13 of the 30S subunit (bridge B1b), connecting the 2 subunits; this bridge is implicated in subunit movement. Contacts the P site tRNA; the 5S rRNA and some of its associated proteins might help stabilize positioning of ribosome-bound tRNAs.</text>
</comment>
<comment type="subunit">
    <text evidence="1">Part of the 50S ribosomal subunit; part of the 5S rRNA/L5/L18/L25 subcomplex. Contacts the 5S rRNA and the P site tRNA. Forms a bridge to the 30S subunit in the 70S ribosome.</text>
</comment>
<comment type="similarity">
    <text evidence="1">Belongs to the universal ribosomal protein uL5 family.</text>
</comment>
<protein>
    <recommendedName>
        <fullName evidence="1">Large ribosomal subunit protein uL5</fullName>
    </recommendedName>
    <alternativeName>
        <fullName evidence="2">50S ribosomal protein L5</fullName>
    </alternativeName>
</protein>
<sequence length="185" mass="21074">MAEAKALPRFKKLYQDNIRKALLEEFKYDNEMQIPRITKVVLNMGVGEATGDSKKPAVAAEDLAMIAGQKAVVTRARNSIATFKLREGMPIGAKVTLRQDRMYEFLDRLITIALPRVRDFRGLNPKSFDGRGNYAMGIKEHIVFPEINYDKVDQIWGMDIIVCTTAKTDDEARSLLRAFNFPFRQ</sequence>